<evidence type="ECO:0000255" key="1">
    <source>
        <dbReference type="HAMAP-Rule" id="MF_01375"/>
    </source>
</evidence>
<reference key="1">
    <citation type="journal article" date="2008" name="BMC Genomics">
        <title>Genomics of an extreme psychrophile, Psychromonas ingrahamii.</title>
        <authorList>
            <person name="Riley M."/>
            <person name="Staley J.T."/>
            <person name="Danchin A."/>
            <person name="Wang T.Z."/>
            <person name="Brettin T.S."/>
            <person name="Hauser L.J."/>
            <person name="Land M.L."/>
            <person name="Thompson L.S."/>
        </authorList>
    </citation>
    <scope>NUCLEOTIDE SEQUENCE [LARGE SCALE GENOMIC DNA]</scope>
    <source>
        <strain>DSM 17664 / CCUG 51855 / 37</strain>
    </source>
</reference>
<feature type="chain" id="PRO_0000284597" description="Phosphonoacetaldehyde hydrolase">
    <location>
        <begin position="1"/>
        <end position="295"/>
    </location>
</feature>
<feature type="active site" description="Nucleophile" evidence="1">
    <location>
        <position position="36"/>
    </location>
</feature>
<feature type="active site" description="Schiff-base intermediate with substrate" evidence="1">
    <location>
        <position position="78"/>
    </location>
</feature>
<feature type="binding site" evidence="1">
    <location>
        <position position="36"/>
    </location>
    <ligand>
        <name>Mg(2+)</name>
        <dbReference type="ChEBI" id="CHEBI:18420"/>
    </ligand>
</feature>
<feature type="binding site" evidence="1">
    <location>
        <position position="38"/>
    </location>
    <ligand>
        <name>Mg(2+)</name>
        <dbReference type="ChEBI" id="CHEBI:18420"/>
    </ligand>
</feature>
<feature type="binding site" evidence="1">
    <location>
        <position position="212"/>
    </location>
    <ligand>
        <name>Mg(2+)</name>
        <dbReference type="ChEBI" id="CHEBI:18420"/>
    </ligand>
</feature>
<keyword id="KW-0378">Hydrolase</keyword>
<keyword id="KW-0460">Magnesium</keyword>
<keyword id="KW-0479">Metal-binding</keyword>
<keyword id="KW-1185">Reference proteome</keyword>
<keyword id="KW-0704">Schiff base</keyword>
<proteinExistence type="inferred from homology"/>
<gene>
    <name evidence="1" type="primary">phnX</name>
    <name type="ordered locus">Ping_2749</name>
</gene>
<protein>
    <recommendedName>
        <fullName evidence="1">Phosphonoacetaldehyde hydrolase</fullName>
        <shortName evidence="1">Phosphonatase</shortName>
        <ecNumber evidence="1">3.11.1.1</ecNumber>
    </recommendedName>
    <alternativeName>
        <fullName evidence="1">Phosphonoacetaldehyde phosphonohydrolase</fullName>
    </alternativeName>
</protein>
<dbReference type="EC" id="3.11.1.1" evidence="1"/>
<dbReference type="EMBL" id="CP000510">
    <property type="protein sequence ID" value="ABM04456.1"/>
    <property type="molecule type" value="Genomic_DNA"/>
</dbReference>
<dbReference type="RefSeq" id="WP_011771011.1">
    <property type="nucleotide sequence ID" value="NC_008709.1"/>
</dbReference>
<dbReference type="SMR" id="A1SY91"/>
<dbReference type="STRING" id="357804.Ping_2749"/>
<dbReference type="KEGG" id="pin:Ping_2749"/>
<dbReference type="eggNOG" id="COG0637">
    <property type="taxonomic scope" value="Bacteria"/>
</dbReference>
<dbReference type="HOGENOM" id="CLU_045011_12_0_6"/>
<dbReference type="OrthoDB" id="5504491at2"/>
<dbReference type="Proteomes" id="UP000000639">
    <property type="component" value="Chromosome"/>
</dbReference>
<dbReference type="GO" id="GO:0005829">
    <property type="term" value="C:cytosol"/>
    <property type="evidence" value="ECO:0007669"/>
    <property type="project" value="TreeGrafter"/>
</dbReference>
<dbReference type="GO" id="GO:0000287">
    <property type="term" value="F:magnesium ion binding"/>
    <property type="evidence" value="ECO:0007669"/>
    <property type="project" value="UniProtKB-UniRule"/>
</dbReference>
<dbReference type="GO" id="GO:0008967">
    <property type="term" value="F:phosphoglycolate phosphatase activity"/>
    <property type="evidence" value="ECO:0007669"/>
    <property type="project" value="TreeGrafter"/>
</dbReference>
<dbReference type="GO" id="GO:0050194">
    <property type="term" value="F:phosphonoacetaldehyde hydrolase activity"/>
    <property type="evidence" value="ECO:0007669"/>
    <property type="project" value="UniProtKB-UniRule"/>
</dbReference>
<dbReference type="GO" id="GO:0006281">
    <property type="term" value="P:DNA repair"/>
    <property type="evidence" value="ECO:0007669"/>
    <property type="project" value="TreeGrafter"/>
</dbReference>
<dbReference type="GO" id="GO:0019700">
    <property type="term" value="P:organic phosphonate catabolic process"/>
    <property type="evidence" value="ECO:0007669"/>
    <property type="project" value="InterPro"/>
</dbReference>
<dbReference type="FunFam" id="1.10.150.240:FF:000006">
    <property type="entry name" value="Phosphonoacetaldehyde hydrolase"/>
    <property type="match status" value="1"/>
</dbReference>
<dbReference type="Gene3D" id="3.40.50.1000">
    <property type="entry name" value="HAD superfamily/HAD-like"/>
    <property type="match status" value="1"/>
</dbReference>
<dbReference type="Gene3D" id="1.10.150.240">
    <property type="entry name" value="Putative phosphatase, domain 2"/>
    <property type="match status" value="1"/>
</dbReference>
<dbReference type="HAMAP" id="MF_01375">
    <property type="entry name" value="PhnX"/>
    <property type="match status" value="1"/>
</dbReference>
<dbReference type="InterPro" id="IPR050155">
    <property type="entry name" value="HAD-like_hydrolase_sf"/>
</dbReference>
<dbReference type="InterPro" id="IPR036412">
    <property type="entry name" value="HAD-like_sf"/>
</dbReference>
<dbReference type="InterPro" id="IPR006439">
    <property type="entry name" value="HAD-SF_hydro_IA"/>
</dbReference>
<dbReference type="InterPro" id="IPR023214">
    <property type="entry name" value="HAD_sf"/>
</dbReference>
<dbReference type="InterPro" id="IPR023198">
    <property type="entry name" value="PGP-like_dom2"/>
</dbReference>
<dbReference type="InterPro" id="IPR006323">
    <property type="entry name" value="Phosphonoacetald_hydro"/>
</dbReference>
<dbReference type="NCBIfam" id="TIGR01509">
    <property type="entry name" value="HAD-SF-IA-v3"/>
    <property type="match status" value="1"/>
</dbReference>
<dbReference type="NCBIfam" id="TIGR01422">
    <property type="entry name" value="phosphonatase"/>
    <property type="match status" value="1"/>
</dbReference>
<dbReference type="PANTHER" id="PTHR43434">
    <property type="entry name" value="PHOSPHOGLYCOLATE PHOSPHATASE"/>
    <property type="match status" value="1"/>
</dbReference>
<dbReference type="PANTHER" id="PTHR43434:SF19">
    <property type="entry name" value="PHOSPHONOACETALDEHYDE HYDROLASE"/>
    <property type="match status" value="1"/>
</dbReference>
<dbReference type="Pfam" id="PF00702">
    <property type="entry name" value="Hydrolase"/>
    <property type="match status" value="1"/>
</dbReference>
<dbReference type="SFLD" id="SFLDS00003">
    <property type="entry name" value="Haloacid_Dehalogenase"/>
    <property type="match status" value="1"/>
</dbReference>
<dbReference type="SFLD" id="SFLDF00038">
    <property type="entry name" value="phosphonoacetaldehyde_hydrolas"/>
    <property type="match status" value="1"/>
</dbReference>
<dbReference type="SUPFAM" id="SSF56784">
    <property type="entry name" value="HAD-like"/>
    <property type="match status" value="1"/>
</dbReference>
<name>PHNX_PSYIN</name>
<comment type="function">
    <text evidence="1">Involved in phosphonate degradation.</text>
</comment>
<comment type="catalytic activity">
    <reaction evidence="1">
        <text>phosphonoacetaldehyde + H2O = acetaldehyde + phosphate + H(+)</text>
        <dbReference type="Rhea" id="RHEA:18905"/>
        <dbReference type="ChEBI" id="CHEBI:15343"/>
        <dbReference type="ChEBI" id="CHEBI:15377"/>
        <dbReference type="ChEBI" id="CHEBI:15378"/>
        <dbReference type="ChEBI" id="CHEBI:43474"/>
        <dbReference type="ChEBI" id="CHEBI:58383"/>
        <dbReference type="EC" id="3.11.1.1"/>
    </reaction>
</comment>
<comment type="cofactor">
    <cofactor evidence="1">
        <name>Mg(2+)</name>
        <dbReference type="ChEBI" id="CHEBI:18420"/>
    </cofactor>
    <text evidence="1">Binds 1 Mg(2+) ion per subunit.</text>
</comment>
<comment type="subunit">
    <text evidence="1">Homodimer.</text>
</comment>
<comment type="similarity">
    <text evidence="1">Belongs to the HAD-like hydrolase superfamily. PhnX family.</text>
</comment>
<sequence length="295" mass="32328">MNSTINNDINNDINNDINNDINNTQSNSPIEAVIFDWAGTIVDFGSFAPTTIFVESFQKEYDFAITLQEARVPMGLGKWDHIQAVGKLPSVATRWQAQFGKAMDNADIDQIYNTFIPLQKVKVVDHADPILNAINVVNDLKKQGIKIGSCSGYPRAVMDVLIPAAAENGYLPDCVVATDDLPYGGRPAPHMALKNVIELGVNSVTNCIKVDDSTPGIEEGHNAGMWTVALLLSGNEAGLTAQEYQQASVQTLNKAREKARLIMKKSNPHYLIDTINDLPAVIKEIELRLIKGERP</sequence>
<accession>A1SY91</accession>
<organism>
    <name type="scientific">Psychromonas ingrahamii (strain DSM 17664 / CCUG 51855 / 37)</name>
    <dbReference type="NCBI Taxonomy" id="357804"/>
    <lineage>
        <taxon>Bacteria</taxon>
        <taxon>Pseudomonadati</taxon>
        <taxon>Pseudomonadota</taxon>
        <taxon>Gammaproteobacteria</taxon>
        <taxon>Alteromonadales</taxon>
        <taxon>Psychromonadaceae</taxon>
        <taxon>Psychromonas</taxon>
    </lineage>
</organism>